<dbReference type="EMBL" id="L25853">
    <property type="protein sequence ID" value="AAA19106.1"/>
    <property type="molecule type" value="Unassigned_DNA"/>
</dbReference>
<dbReference type="EMBL" id="U00096">
    <property type="protein sequence ID" value="AAC75740.1"/>
    <property type="molecule type" value="Genomic_DNA"/>
</dbReference>
<dbReference type="EMBL" id="AP009048">
    <property type="protein sequence ID" value="BAA16560.1"/>
    <property type="molecule type" value="Genomic_DNA"/>
</dbReference>
<dbReference type="PIR" id="F65049">
    <property type="entry name" value="F65049"/>
</dbReference>
<dbReference type="RefSeq" id="NP_417178.1">
    <property type="nucleotide sequence ID" value="NC_000913.3"/>
</dbReference>
<dbReference type="RefSeq" id="WP_000140508.1">
    <property type="nucleotide sequence ID" value="NZ_LN832404.1"/>
</dbReference>
<dbReference type="SMR" id="P33596"/>
<dbReference type="BioGRID" id="4259217">
    <property type="interactions" value="133"/>
</dbReference>
<dbReference type="BioGRID" id="851504">
    <property type="interactions" value="1"/>
</dbReference>
<dbReference type="DIP" id="DIP-10410N"/>
<dbReference type="FunCoup" id="P33596">
    <property type="interactions" value="117"/>
</dbReference>
<dbReference type="IntAct" id="P33596">
    <property type="interactions" value="5"/>
</dbReference>
<dbReference type="STRING" id="511145.b2698"/>
<dbReference type="jPOST" id="P33596"/>
<dbReference type="PaxDb" id="511145-b2698"/>
<dbReference type="EnsemblBacteria" id="AAC75740">
    <property type="protein sequence ID" value="AAC75740"/>
    <property type="gene ID" value="b2698"/>
</dbReference>
<dbReference type="GeneID" id="947172"/>
<dbReference type="KEGG" id="ecj:JW2668"/>
<dbReference type="KEGG" id="eco:b2698"/>
<dbReference type="KEGG" id="ecoc:C3026_14855"/>
<dbReference type="PATRIC" id="fig|1411691.4.peg.4044"/>
<dbReference type="EchoBASE" id="EB2005"/>
<dbReference type="eggNOG" id="COG2137">
    <property type="taxonomic scope" value="Bacteria"/>
</dbReference>
<dbReference type="HOGENOM" id="CLU_066607_3_2_6"/>
<dbReference type="InParanoid" id="P33596"/>
<dbReference type="OMA" id="EPQDWFE"/>
<dbReference type="OrthoDB" id="7066780at2"/>
<dbReference type="PhylomeDB" id="P33596"/>
<dbReference type="BioCyc" id="EcoCyc:EG12080-MONOMER"/>
<dbReference type="PRO" id="PR:P33596"/>
<dbReference type="Proteomes" id="UP000000625">
    <property type="component" value="Chromosome"/>
</dbReference>
<dbReference type="GO" id="GO:0005737">
    <property type="term" value="C:cytoplasm"/>
    <property type="evidence" value="ECO:0007669"/>
    <property type="project" value="UniProtKB-SubCell"/>
</dbReference>
<dbReference type="GO" id="GO:0019899">
    <property type="term" value="F:enzyme binding"/>
    <property type="evidence" value="ECO:0000353"/>
    <property type="project" value="EcoCyc"/>
</dbReference>
<dbReference type="GO" id="GO:0006974">
    <property type="term" value="P:DNA damage response"/>
    <property type="evidence" value="ECO:0000270"/>
    <property type="project" value="EcoCyc"/>
</dbReference>
<dbReference type="GO" id="GO:0006281">
    <property type="term" value="P:DNA repair"/>
    <property type="evidence" value="ECO:0007669"/>
    <property type="project" value="UniProtKB-KW"/>
</dbReference>
<dbReference type="GO" id="GO:0006282">
    <property type="term" value="P:regulation of DNA repair"/>
    <property type="evidence" value="ECO:0007669"/>
    <property type="project" value="UniProtKB-UniRule"/>
</dbReference>
<dbReference type="GO" id="GO:0009432">
    <property type="term" value="P:SOS response"/>
    <property type="evidence" value="ECO:0000270"/>
    <property type="project" value="EcoCyc"/>
</dbReference>
<dbReference type="FunFam" id="1.10.10.10:FF:000133">
    <property type="entry name" value="Regulatory protein RecX"/>
    <property type="match status" value="1"/>
</dbReference>
<dbReference type="FunFam" id="1.10.10.10:FF:000134">
    <property type="entry name" value="Regulatory protein RecX"/>
    <property type="match status" value="1"/>
</dbReference>
<dbReference type="FunFam" id="1.10.10.10:FF:000209">
    <property type="entry name" value="Regulatory protein RecX"/>
    <property type="match status" value="1"/>
</dbReference>
<dbReference type="Gene3D" id="1.10.10.10">
    <property type="entry name" value="Winged helix-like DNA-binding domain superfamily/Winged helix DNA-binding domain"/>
    <property type="match status" value="3"/>
</dbReference>
<dbReference type="HAMAP" id="MF_01114">
    <property type="entry name" value="RecX"/>
    <property type="match status" value="1"/>
</dbReference>
<dbReference type="InterPro" id="IPR053926">
    <property type="entry name" value="RecX_HTH_1st"/>
</dbReference>
<dbReference type="InterPro" id="IPR053924">
    <property type="entry name" value="RecX_HTH_2nd"/>
</dbReference>
<dbReference type="InterPro" id="IPR053925">
    <property type="entry name" value="RecX_HTH_3rd"/>
</dbReference>
<dbReference type="InterPro" id="IPR003783">
    <property type="entry name" value="Regulatory_RecX"/>
</dbReference>
<dbReference type="InterPro" id="IPR036388">
    <property type="entry name" value="WH-like_DNA-bd_sf"/>
</dbReference>
<dbReference type="NCBIfam" id="NF001052">
    <property type="entry name" value="PRK00117.1-1"/>
    <property type="match status" value="1"/>
</dbReference>
<dbReference type="PANTHER" id="PTHR33602">
    <property type="entry name" value="REGULATORY PROTEIN RECX FAMILY PROTEIN"/>
    <property type="match status" value="1"/>
</dbReference>
<dbReference type="PANTHER" id="PTHR33602:SF1">
    <property type="entry name" value="REGULATORY PROTEIN RECX FAMILY PROTEIN"/>
    <property type="match status" value="1"/>
</dbReference>
<dbReference type="Pfam" id="PF21982">
    <property type="entry name" value="RecX_HTH1"/>
    <property type="match status" value="1"/>
</dbReference>
<dbReference type="Pfam" id="PF02631">
    <property type="entry name" value="RecX_HTH2"/>
    <property type="match status" value="1"/>
</dbReference>
<dbReference type="Pfam" id="PF21981">
    <property type="entry name" value="RecX_HTH3"/>
    <property type="match status" value="1"/>
</dbReference>
<accession>P33596</accession>
<accession>P77798</accession>
<gene>
    <name type="primary">recX</name>
    <name type="synonym">oraA</name>
    <name type="ordered locus">b2698</name>
    <name type="ordered locus">JW2668</name>
</gene>
<feature type="chain" id="PRO_0000162429" description="Regulatory protein RecX">
    <location>
        <begin position="1"/>
        <end position="166"/>
    </location>
</feature>
<feature type="sequence conflict" description="In Ref. 1; AAA19106." evidence="2" ref="1">
    <original>V</original>
    <variation>L</variation>
    <location>
        <position position="19"/>
    </location>
</feature>
<feature type="sequence conflict" description="In Ref. 1; AAA19106." evidence="2" ref="1">
    <original>L</original>
    <variation>P</variation>
    <location>
        <position position="120"/>
    </location>
</feature>
<name>RECX_ECOLI</name>
<protein>
    <recommendedName>
        <fullName>Regulatory protein RecX</fullName>
    </recommendedName>
    <alternativeName>
        <fullName>Protein OraA</fullName>
    </alternativeName>
</protein>
<sequence>MTESTSRRPAYARLLDRAVRILAVRDHSEQELRRKLAAPIMGKNGPEEIDATAEDYERVIAWCHEHGYLDDSRFVARFIASRSRKGYGPARIRQELNQKGISREATEKAMRECDIDWCALARDQATRKYGEPLPTVFSEKVKIQRFLLYRGYLMEDIQEIWRNFAD</sequence>
<keyword id="KW-0963">Cytoplasm</keyword>
<keyword id="KW-0227">DNA damage</keyword>
<keyword id="KW-0234">DNA repair</keyword>
<keyword id="KW-1185">Reference proteome</keyword>
<keyword id="KW-0742">SOS response</keyword>
<reference key="1">
    <citation type="journal article" date="1994" name="Mutat. Res.">
        <title>Nucleotide sequence between recA and alaSp in E. coli K12 and the sequence change in four recA mutations.</title>
        <authorList>
            <person name="Zaitsev E."/>
            <person name="Alexseyev A."/>
            <person name="Lanzov V."/>
            <person name="Satin L."/>
            <person name="Clark A.J."/>
        </authorList>
    </citation>
    <scope>NUCLEOTIDE SEQUENCE [GENOMIC DNA]</scope>
    <source>
        <strain>K12 / CS520</strain>
    </source>
</reference>
<reference key="2">
    <citation type="journal article" date="1997" name="DNA Res.">
        <title>Construction of a contiguous 874-kb sequence of the Escherichia coli-K12 genome corresponding to 50.0-68.8 min on the linkage map and analysis of its sequence features.</title>
        <authorList>
            <person name="Yamamoto Y."/>
            <person name="Aiba H."/>
            <person name="Baba T."/>
            <person name="Hayashi K."/>
            <person name="Inada T."/>
            <person name="Isono K."/>
            <person name="Itoh T."/>
            <person name="Kimura S."/>
            <person name="Kitagawa M."/>
            <person name="Makino K."/>
            <person name="Miki T."/>
            <person name="Mitsuhashi N."/>
            <person name="Mizobuchi K."/>
            <person name="Mori H."/>
            <person name="Nakade S."/>
            <person name="Nakamura Y."/>
            <person name="Nashimoto H."/>
            <person name="Oshima T."/>
            <person name="Oyama S."/>
            <person name="Saito N."/>
            <person name="Sampei G."/>
            <person name="Satoh Y."/>
            <person name="Sivasundaram S."/>
            <person name="Tagami H."/>
            <person name="Takahashi H."/>
            <person name="Takeda J."/>
            <person name="Takemoto K."/>
            <person name="Uehara K."/>
            <person name="Wada C."/>
            <person name="Yamagata S."/>
            <person name="Horiuchi T."/>
        </authorList>
    </citation>
    <scope>NUCLEOTIDE SEQUENCE [LARGE SCALE GENOMIC DNA]</scope>
    <source>
        <strain>K12 / W3110 / ATCC 27325 / DSM 5911</strain>
    </source>
</reference>
<reference key="3">
    <citation type="journal article" date="1997" name="Science">
        <title>The complete genome sequence of Escherichia coli K-12.</title>
        <authorList>
            <person name="Blattner F.R."/>
            <person name="Plunkett G. III"/>
            <person name="Bloch C.A."/>
            <person name="Perna N.T."/>
            <person name="Burland V."/>
            <person name="Riley M."/>
            <person name="Collado-Vides J."/>
            <person name="Glasner J.D."/>
            <person name="Rode C.K."/>
            <person name="Mayhew G.F."/>
            <person name="Gregor J."/>
            <person name="Davis N.W."/>
            <person name="Kirkpatrick H.A."/>
            <person name="Goeden M.A."/>
            <person name="Rose D.J."/>
            <person name="Mau B."/>
            <person name="Shao Y."/>
        </authorList>
    </citation>
    <scope>NUCLEOTIDE SEQUENCE [LARGE SCALE GENOMIC DNA]</scope>
    <source>
        <strain>K12 / MG1655 / ATCC 47076</strain>
    </source>
</reference>
<reference key="4">
    <citation type="journal article" date="2006" name="Mol. Syst. Biol.">
        <title>Highly accurate genome sequences of Escherichia coli K-12 strains MG1655 and W3110.</title>
        <authorList>
            <person name="Hayashi K."/>
            <person name="Morooka N."/>
            <person name="Yamamoto Y."/>
            <person name="Fujita K."/>
            <person name="Isono K."/>
            <person name="Choi S."/>
            <person name="Ohtsubo E."/>
            <person name="Baba T."/>
            <person name="Wanner B.L."/>
            <person name="Mori H."/>
            <person name="Horiuchi T."/>
        </authorList>
    </citation>
    <scope>NUCLEOTIDE SEQUENCE [LARGE SCALE GENOMIC DNA]</scope>
    <source>
        <strain>K12 / W3110 / ATCC 27325 / DSM 5911</strain>
    </source>
</reference>
<reference key="5">
    <citation type="journal article" date="2003" name="J. Biol. Chem.">
        <title>Escherichia coli RecX inhibits RecA recombinase and coprotease activities in vitro and in vivo.</title>
        <authorList>
            <person name="Stohl E.A."/>
            <person name="Brockman J.P."/>
            <person name="Burkle K.L."/>
            <person name="Morimatsu K."/>
            <person name="Kowalczykowski S.C."/>
            <person name="Seifert H.S."/>
        </authorList>
    </citation>
    <scope>FUNCTION</scope>
</reference>
<reference key="6">
    <citation type="journal article" date="1994" name="Nucleic Acids Res.">
        <title>A putative regulatory gene downstream of recA is conserved in Gram-negative and Gram-positive bacteria.</title>
        <authorList>
            <person name="de Mot R."/>
            <person name="Schoofs G."/>
            <person name="Vanderleyden J."/>
        </authorList>
    </citation>
    <scope>SIMILARITY</scope>
</reference>
<proteinExistence type="evidence at protein level"/>
<organism>
    <name type="scientific">Escherichia coli (strain K12)</name>
    <dbReference type="NCBI Taxonomy" id="83333"/>
    <lineage>
        <taxon>Bacteria</taxon>
        <taxon>Pseudomonadati</taxon>
        <taxon>Pseudomonadota</taxon>
        <taxon>Gammaproteobacteria</taxon>
        <taxon>Enterobacterales</taxon>
        <taxon>Enterobacteriaceae</taxon>
        <taxon>Escherichia</taxon>
    </lineage>
</organism>
<evidence type="ECO:0000269" key="1">
    <source>
    </source>
</evidence>
<evidence type="ECO:0000305" key="2"/>
<comment type="function">
    <text evidence="1">Modulates RecA activity through direct physical interaction. Can inhibit both RecA recombinase and coprotease activities. May have a regulatory role during the SOS response. Inhibits DNA strand exchange in vitro.</text>
</comment>
<comment type="interaction">
    <interactant intactId="EBI-1129990">
        <id>P33596</id>
    </interactant>
    <interactant intactId="EBI-550021">
        <id>P61949</id>
        <label>fldA</label>
    </interactant>
    <organismsDiffer>false</organismsDiffer>
    <experiments>3</experiments>
</comment>
<comment type="subcellular location">
    <subcellularLocation>
        <location evidence="2">Cytoplasm</location>
    </subcellularLocation>
</comment>
<comment type="induction">
    <text>By DNA damage, via LexA, as part of the SOS response.</text>
</comment>
<comment type="similarity">
    <text evidence="2">Belongs to the RecX family.</text>
</comment>